<proteinExistence type="evidence at transcript level"/>
<feature type="signal peptide" evidence="3">
    <location>
        <begin position="1"/>
        <end position="19"/>
    </location>
</feature>
<feature type="chain" id="PRO_5002880254" description="Ice-binding protein" evidence="3">
    <location>
        <begin position="20"/>
        <end position="247"/>
    </location>
</feature>
<feature type="site" description="Ice-binding" evidence="1">
    <location>
        <position position="64"/>
    </location>
</feature>
<feature type="site" description="Ice-binding" evidence="1">
    <location>
        <position position="146"/>
    </location>
</feature>
<feature type="site" description="Ice-binding" evidence="2">
    <location>
        <position position="218"/>
    </location>
</feature>
<feature type="glycosylation site" description="N-linked (GlcNAc...) asparagine" evidence="4">
    <location>
        <position position="219"/>
    </location>
</feature>
<feature type="sequence conflict" description="In Ref. 1; ACL27143." evidence="6" ref="1">
    <original>P</original>
    <variation>L</variation>
    <location>
        <position position="45"/>
    </location>
</feature>
<comment type="function">
    <text evidence="7">Binds ice crystals and most probably inhibits their growth in order to prevent cell damage from extracellular ice.</text>
</comment>
<comment type="subcellular location">
    <subcellularLocation>
        <location evidence="6">Secreted</location>
    </subcellularLocation>
</comment>
<comment type="similarity">
    <text evidence="6">Belongs to the ice-binding protein family.</text>
</comment>
<evidence type="ECO:0000250" key="1">
    <source>
        <dbReference type="UniProtKB" id="C7F6X3"/>
    </source>
</evidence>
<evidence type="ECO:0000250" key="2">
    <source>
        <dbReference type="UniProtKB" id="H7FWB6"/>
    </source>
</evidence>
<evidence type="ECO:0000255" key="3"/>
<evidence type="ECO:0000255" key="4">
    <source>
        <dbReference type="PROSITE-ProRule" id="PRU00498"/>
    </source>
</evidence>
<evidence type="ECO:0000303" key="5">
    <source>
    </source>
</evidence>
<evidence type="ECO:0000305" key="6"/>
<evidence type="ECO:0000305" key="7">
    <source>
    </source>
</evidence>
<evidence type="ECO:0000312" key="8">
    <source>
        <dbReference type="EMBL" id="ACL27143.1"/>
    </source>
</evidence>
<evidence type="ECO:0000312" key="9">
    <source>
        <dbReference type="EMBL" id="ACL27144.1"/>
    </source>
</evidence>
<sequence length="247" mass="24908">MTFSILSIFVFGLISSSVALGPAPVLLGKAENFAILSETGVSNVPDSSVNCDIGVSPIGASGVTGFSLTGDSGGSFSTSKQVTGRVYASTYGDPTPASLTTAVFDMENAYKDAQERIDPDFTNLHTGALGGAILVPGLYKFTTGVSITADLVLTGGPTDTYIFQIAGTLSLAAGVKINLVGGLLPANVVWAVADSVTVAATSSFQGILLGKTQVVVNTNASVEGRILAQTAVVLQKATVIVPGVCGA</sequence>
<protein>
    <recommendedName>
        <fullName evidence="5 8 9">Ice-binding protein</fullName>
    </recommendedName>
    <alternativeName>
        <fullName evidence="6">Antifreeze protein</fullName>
        <shortName evidence="6">AFP</shortName>
    </alternativeName>
</protein>
<organism>
    <name type="scientific">Flammulina populicola</name>
    <name type="common">Enokitake mushroom</name>
    <dbReference type="NCBI Taxonomy" id="72155"/>
    <lineage>
        <taxon>Eukaryota</taxon>
        <taxon>Fungi</taxon>
        <taxon>Dikarya</taxon>
        <taxon>Basidiomycota</taxon>
        <taxon>Agaricomycotina</taxon>
        <taxon>Agaricomycetes</taxon>
        <taxon>Agaricomycetidae</taxon>
        <taxon>Agaricales</taxon>
        <taxon>Marasmiineae</taxon>
        <taxon>Physalacriaceae</taxon>
        <taxon>Flammulina</taxon>
    </lineage>
</organism>
<accession>B8XC03</accession>
<accession>B8XC02</accession>
<dbReference type="EMBL" id="FJ200000">
    <property type="protein sequence ID" value="ACL27143.1"/>
    <property type="molecule type" value="mRNA"/>
</dbReference>
<dbReference type="EMBL" id="FJ200001">
    <property type="protein sequence ID" value="ACL27144.1"/>
    <property type="molecule type" value="Genomic_DNA"/>
</dbReference>
<dbReference type="SMR" id="B8XC03"/>
<dbReference type="GO" id="GO:0005576">
    <property type="term" value="C:extracellular region"/>
    <property type="evidence" value="ECO:0007669"/>
    <property type="project" value="UniProtKB-SubCell"/>
</dbReference>
<dbReference type="InterPro" id="IPR021884">
    <property type="entry name" value="Ice-bd_prot"/>
</dbReference>
<dbReference type="Pfam" id="PF11999">
    <property type="entry name" value="Ice_binding"/>
    <property type="match status" value="1"/>
</dbReference>
<reference evidence="9" key="1">
    <citation type="journal article" date="2009" name="Cryobiology">
        <title>Ice-binding proteins from enoki and shiitake mushrooms.</title>
        <authorList>
            <person name="Raymond J.A."/>
            <person name="Janech M.G."/>
        </authorList>
    </citation>
    <scope>NUCLEOTIDE SEQUENCE [GENOMIC DNA / MRNA]</scope>
    <scope>FUNCTION</scope>
</reference>
<name>IBP_FLAPO</name>
<keyword id="KW-0325">Glycoprotein</keyword>
<keyword id="KW-0964">Secreted</keyword>
<keyword id="KW-0732">Signal</keyword>